<evidence type="ECO:0000255" key="1">
    <source>
        <dbReference type="HAMAP-Rule" id="MF_00575"/>
    </source>
</evidence>
<accession>Q5P1I2</accession>
<comment type="function">
    <text evidence="1">Hydrolyzes the pyrophosphate bond of UDP-2,3-diacylglucosamine to yield 2,3-diacylglucosamine 1-phosphate (lipid X) and UMP by catalyzing the attack of water at the alpha-P atom. Involved in the biosynthesis of lipid A, a phosphorylated glycolipid that anchors the lipopolysaccharide to the outer membrane of the cell.</text>
</comment>
<comment type="catalytic activity">
    <reaction evidence="1">
        <text>UDP-2-N,3-O-bis[(3R)-3-hydroxytetradecanoyl]-alpha-D-glucosamine + H2O = 2-N,3-O-bis[(3R)-3-hydroxytetradecanoyl]-alpha-D-glucosaminyl 1-phosphate + UMP + 2 H(+)</text>
        <dbReference type="Rhea" id="RHEA:25213"/>
        <dbReference type="ChEBI" id="CHEBI:15377"/>
        <dbReference type="ChEBI" id="CHEBI:15378"/>
        <dbReference type="ChEBI" id="CHEBI:57865"/>
        <dbReference type="ChEBI" id="CHEBI:57957"/>
        <dbReference type="ChEBI" id="CHEBI:78847"/>
        <dbReference type="EC" id="3.6.1.54"/>
    </reaction>
</comment>
<comment type="cofactor">
    <cofactor evidence="1">
        <name>Mn(2+)</name>
        <dbReference type="ChEBI" id="CHEBI:29035"/>
    </cofactor>
    <text evidence="1">Binds 2 Mn(2+) ions per subunit in a binuclear metal center.</text>
</comment>
<comment type="pathway">
    <text evidence="1">Glycolipid biosynthesis; lipid IV(A) biosynthesis; lipid IV(A) from (3R)-3-hydroxytetradecanoyl-[acyl-carrier-protein] and UDP-N-acetyl-alpha-D-glucosamine: step 4/6.</text>
</comment>
<comment type="subcellular location">
    <subcellularLocation>
        <location evidence="1">Cell inner membrane</location>
        <topology evidence="1">Peripheral membrane protein</topology>
        <orientation evidence="1">Cytoplasmic side</orientation>
    </subcellularLocation>
</comment>
<comment type="similarity">
    <text evidence="1">Belongs to the LpxH family.</text>
</comment>
<gene>
    <name evidence="1" type="primary">lpxH</name>
    <name type="ordered locus">AZOSEA27070</name>
    <name type="ORF">ebA4786</name>
</gene>
<dbReference type="EC" id="3.6.1.54" evidence="1"/>
<dbReference type="EMBL" id="CR555306">
    <property type="protein sequence ID" value="CAI08832.1"/>
    <property type="molecule type" value="Genomic_DNA"/>
</dbReference>
<dbReference type="RefSeq" id="WP_011238515.1">
    <property type="nucleotide sequence ID" value="NC_006513.1"/>
</dbReference>
<dbReference type="SMR" id="Q5P1I2"/>
<dbReference type="STRING" id="76114.ebA4786"/>
<dbReference type="KEGG" id="eba:ebA4786"/>
<dbReference type="eggNOG" id="COG2908">
    <property type="taxonomic scope" value="Bacteria"/>
</dbReference>
<dbReference type="HOGENOM" id="CLU_074586_0_0_4"/>
<dbReference type="OrthoDB" id="9783283at2"/>
<dbReference type="UniPathway" id="UPA00359">
    <property type="reaction ID" value="UER00480"/>
</dbReference>
<dbReference type="Proteomes" id="UP000006552">
    <property type="component" value="Chromosome"/>
</dbReference>
<dbReference type="GO" id="GO:0005737">
    <property type="term" value="C:cytoplasm"/>
    <property type="evidence" value="ECO:0007669"/>
    <property type="project" value="InterPro"/>
</dbReference>
<dbReference type="GO" id="GO:0019897">
    <property type="term" value="C:extrinsic component of plasma membrane"/>
    <property type="evidence" value="ECO:0007669"/>
    <property type="project" value="UniProtKB-UniRule"/>
</dbReference>
<dbReference type="GO" id="GO:0030145">
    <property type="term" value="F:manganese ion binding"/>
    <property type="evidence" value="ECO:0007669"/>
    <property type="project" value="UniProtKB-UniRule"/>
</dbReference>
<dbReference type="GO" id="GO:0008758">
    <property type="term" value="F:UDP-2,3-diacylglucosamine hydrolase activity"/>
    <property type="evidence" value="ECO:0007669"/>
    <property type="project" value="UniProtKB-UniRule"/>
</dbReference>
<dbReference type="GO" id="GO:0009245">
    <property type="term" value="P:lipid A biosynthetic process"/>
    <property type="evidence" value="ECO:0007669"/>
    <property type="project" value="UniProtKB-UniRule"/>
</dbReference>
<dbReference type="CDD" id="cd07398">
    <property type="entry name" value="MPP_YbbF-LpxH"/>
    <property type="match status" value="1"/>
</dbReference>
<dbReference type="Gene3D" id="3.60.21.10">
    <property type="match status" value="1"/>
</dbReference>
<dbReference type="HAMAP" id="MF_00575">
    <property type="entry name" value="LpxH"/>
    <property type="match status" value="1"/>
</dbReference>
<dbReference type="InterPro" id="IPR004843">
    <property type="entry name" value="Calcineurin-like_PHP_ApaH"/>
</dbReference>
<dbReference type="InterPro" id="IPR043461">
    <property type="entry name" value="LpxH-like"/>
</dbReference>
<dbReference type="InterPro" id="IPR029052">
    <property type="entry name" value="Metallo-depent_PP-like"/>
</dbReference>
<dbReference type="InterPro" id="IPR010138">
    <property type="entry name" value="UDP-diacylglucosamine_Hdrlase"/>
</dbReference>
<dbReference type="NCBIfam" id="TIGR01854">
    <property type="entry name" value="lipid_A_lpxH"/>
    <property type="match status" value="1"/>
</dbReference>
<dbReference type="NCBIfam" id="NF003743">
    <property type="entry name" value="PRK05340.1"/>
    <property type="match status" value="1"/>
</dbReference>
<dbReference type="PANTHER" id="PTHR34990:SF1">
    <property type="entry name" value="UDP-2,3-DIACYLGLUCOSAMINE HYDROLASE"/>
    <property type="match status" value="1"/>
</dbReference>
<dbReference type="PANTHER" id="PTHR34990">
    <property type="entry name" value="UDP-2,3-DIACYLGLUCOSAMINE HYDROLASE-RELATED"/>
    <property type="match status" value="1"/>
</dbReference>
<dbReference type="Pfam" id="PF00149">
    <property type="entry name" value="Metallophos"/>
    <property type="match status" value="1"/>
</dbReference>
<dbReference type="SUPFAM" id="SSF56300">
    <property type="entry name" value="Metallo-dependent phosphatases"/>
    <property type="match status" value="1"/>
</dbReference>
<proteinExistence type="inferred from homology"/>
<feature type="chain" id="PRO_1000025047" description="UDP-2,3-diacylglucosamine hydrolase">
    <location>
        <begin position="1"/>
        <end position="245"/>
    </location>
</feature>
<feature type="binding site" evidence="1">
    <location>
        <position position="8"/>
    </location>
    <ligand>
        <name>Mn(2+)</name>
        <dbReference type="ChEBI" id="CHEBI:29035"/>
        <label>1</label>
    </ligand>
</feature>
<feature type="binding site" evidence="1">
    <location>
        <position position="10"/>
    </location>
    <ligand>
        <name>Mn(2+)</name>
        <dbReference type="ChEBI" id="CHEBI:29035"/>
        <label>1</label>
    </ligand>
</feature>
<feature type="binding site" evidence="1">
    <location>
        <position position="41"/>
    </location>
    <ligand>
        <name>Mn(2+)</name>
        <dbReference type="ChEBI" id="CHEBI:29035"/>
        <label>1</label>
    </ligand>
</feature>
<feature type="binding site" evidence="1">
    <location>
        <position position="41"/>
    </location>
    <ligand>
        <name>Mn(2+)</name>
        <dbReference type="ChEBI" id="CHEBI:29035"/>
        <label>2</label>
    </ligand>
</feature>
<feature type="binding site" evidence="1">
    <location>
        <begin position="79"/>
        <end position="80"/>
    </location>
    <ligand>
        <name>substrate</name>
    </ligand>
</feature>
<feature type="binding site" evidence="1">
    <location>
        <position position="79"/>
    </location>
    <ligand>
        <name>Mn(2+)</name>
        <dbReference type="ChEBI" id="CHEBI:29035"/>
        <label>2</label>
    </ligand>
</feature>
<feature type="binding site" evidence="1">
    <location>
        <position position="114"/>
    </location>
    <ligand>
        <name>Mn(2+)</name>
        <dbReference type="ChEBI" id="CHEBI:29035"/>
        <label>2</label>
    </ligand>
</feature>
<feature type="binding site" evidence="1">
    <location>
        <position position="122"/>
    </location>
    <ligand>
        <name>substrate</name>
    </ligand>
</feature>
<feature type="binding site" evidence="1">
    <location>
        <position position="160"/>
    </location>
    <ligand>
        <name>substrate</name>
    </ligand>
</feature>
<feature type="binding site" evidence="1">
    <location>
        <position position="164"/>
    </location>
    <ligand>
        <name>substrate</name>
    </ligand>
</feature>
<feature type="binding site" evidence="1">
    <location>
        <position position="167"/>
    </location>
    <ligand>
        <name>substrate</name>
    </ligand>
</feature>
<feature type="binding site" evidence="1">
    <location>
        <position position="195"/>
    </location>
    <ligand>
        <name>Mn(2+)</name>
        <dbReference type="ChEBI" id="CHEBI:29035"/>
        <label>2</label>
    </ligand>
</feature>
<feature type="binding site" evidence="1">
    <location>
        <position position="195"/>
    </location>
    <ligand>
        <name>substrate</name>
    </ligand>
</feature>
<feature type="binding site" evidence="1">
    <location>
        <position position="197"/>
    </location>
    <ligand>
        <name>Mn(2+)</name>
        <dbReference type="ChEBI" id="CHEBI:29035"/>
        <label>1</label>
    </ligand>
</feature>
<sequence length="245" mass="27602">MSALFISDLHLCEQRPVTLRAFFAFLQGPARSVQALYILGDLFEYWAGDDDATPLDNAVSDALAALAETGTSLFFLPGNRDFLLGESFARRARLRILPDPTLIDFDNEGVLLSHGDILCTDDEHYQSFRRLVRDPAWQLAFLERPLAQRKQVIEGLRFQSETAKQEKASDIMDVNAFAVETLLREHGYPTLIHGHTHRPAHHVHVVDGRSCERWVLADWHDDAPYLRWDGAGPPVALRFGAKLGT</sequence>
<organism>
    <name type="scientific">Aromatoleum aromaticum (strain DSM 19018 / LMG 30748 / EbN1)</name>
    <name type="common">Azoarcus sp. (strain EbN1)</name>
    <dbReference type="NCBI Taxonomy" id="76114"/>
    <lineage>
        <taxon>Bacteria</taxon>
        <taxon>Pseudomonadati</taxon>
        <taxon>Pseudomonadota</taxon>
        <taxon>Betaproteobacteria</taxon>
        <taxon>Rhodocyclales</taxon>
        <taxon>Rhodocyclaceae</taxon>
        <taxon>Aromatoleum</taxon>
    </lineage>
</organism>
<protein>
    <recommendedName>
        <fullName evidence="1">UDP-2,3-diacylglucosamine hydrolase</fullName>
        <ecNumber evidence="1">3.6.1.54</ecNumber>
    </recommendedName>
    <alternativeName>
        <fullName evidence="1">UDP-2,3-diacylglucosamine diphosphatase</fullName>
    </alternativeName>
</protein>
<reference key="1">
    <citation type="journal article" date="2005" name="Arch. Microbiol.">
        <title>The genome sequence of an anaerobic aromatic-degrading denitrifying bacterium, strain EbN1.</title>
        <authorList>
            <person name="Rabus R."/>
            <person name="Kube M."/>
            <person name="Heider J."/>
            <person name="Beck A."/>
            <person name="Heitmann K."/>
            <person name="Widdel F."/>
            <person name="Reinhardt R."/>
        </authorList>
    </citation>
    <scope>NUCLEOTIDE SEQUENCE [LARGE SCALE GENOMIC DNA]</scope>
    <source>
        <strain>DSM 19018 / LMG 30748 / EbN1</strain>
    </source>
</reference>
<name>LPXH_AROAE</name>
<keyword id="KW-0997">Cell inner membrane</keyword>
<keyword id="KW-1003">Cell membrane</keyword>
<keyword id="KW-0378">Hydrolase</keyword>
<keyword id="KW-0441">Lipid A biosynthesis</keyword>
<keyword id="KW-0444">Lipid biosynthesis</keyword>
<keyword id="KW-0443">Lipid metabolism</keyword>
<keyword id="KW-0464">Manganese</keyword>
<keyword id="KW-0472">Membrane</keyword>
<keyword id="KW-0479">Metal-binding</keyword>
<keyword id="KW-1185">Reference proteome</keyword>